<dbReference type="EC" id="2.7.2.3" evidence="1"/>
<dbReference type="EMBL" id="CP000038">
    <property type="protein sequence ID" value="AAZ89666.1"/>
    <property type="molecule type" value="Genomic_DNA"/>
</dbReference>
<dbReference type="RefSeq" id="WP_005143530.1">
    <property type="nucleotide sequence ID" value="NC_007384.1"/>
</dbReference>
<dbReference type="SMR" id="Q3YXU6"/>
<dbReference type="GeneID" id="93779072"/>
<dbReference type="KEGG" id="ssn:SSON_3078"/>
<dbReference type="HOGENOM" id="CLU_025427_0_2_6"/>
<dbReference type="UniPathway" id="UPA00109">
    <property type="reaction ID" value="UER00185"/>
</dbReference>
<dbReference type="Proteomes" id="UP000002529">
    <property type="component" value="Chromosome"/>
</dbReference>
<dbReference type="GO" id="GO:0005829">
    <property type="term" value="C:cytosol"/>
    <property type="evidence" value="ECO:0007669"/>
    <property type="project" value="TreeGrafter"/>
</dbReference>
<dbReference type="GO" id="GO:0043531">
    <property type="term" value="F:ADP binding"/>
    <property type="evidence" value="ECO:0007669"/>
    <property type="project" value="TreeGrafter"/>
</dbReference>
<dbReference type="GO" id="GO:0005524">
    <property type="term" value="F:ATP binding"/>
    <property type="evidence" value="ECO:0007669"/>
    <property type="project" value="UniProtKB-KW"/>
</dbReference>
<dbReference type="GO" id="GO:0004618">
    <property type="term" value="F:phosphoglycerate kinase activity"/>
    <property type="evidence" value="ECO:0007669"/>
    <property type="project" value="UniProtKB-UniRule"/>
</dbReference>
<dbReference type="GO" id="GO:0006094">
    <property type="term" value="P:gluconeogenesis"/>
    <property type="evidence" value="ECO:0007669"/>
    <property type="project" value="TreeGrafter"/>
</dbReference>
<dbReference type="GO" id="GO:0006096">
    <property type="term" value="P:glycolytic process"/>
    <property type="evidence" value="ECO:0007669"/>
    <property type="project" value="UniProtKB-UniRule"/>
</dbReference>
<dbReference type="FunFam" id="3.40.50.1260:FF:000001">
    <property type="entry name" value="Phosphoglycerate kinase"/>
    <property type="match status" value="1"/>
</dbReference>
<dbReference type="FunFam" id="3.40.50.1260:FF:000002">
    <property type="entry name" value="Phosphoglycerate kinase"/>
    <property type="match status" value="1"/>
</dbReference>
<dbReference type="Gene3D" id="3.40.50.1260">
    <property type="entry name" value="Phosphoglycerate kinase, N-terminal domain"/>
    <property type="match status" value="2"/>
</dbReference>
<dbReference type="HAMAP" id="MF_00145">
    <property type="entry name" value="Phosphoglyc_kinase"/>
    <property type="match status" value="1"/>
</dbReference>
<dbReference type="InterPro" id="IPR001576">
    <property type="entry name" value="Phosphoglycerate_kinase"/>
</dbReference>
<dbReference type="InterPro" id="IPR015911">
    <property type="entry name" value="Phosphoglycerate_kinase_CS"/>
</dbReference>
<dbReference type="InterPro" id="IPR015824">
    <property type="entry name" value="Phosphoglycerate_kinase_N"/>
</dbReference>
<dbReference type="InterPro" id="IPR036043">
    <property type="entry name" value="Phosphoglycerate_kinase_sf"/>
</dbReference>
<dbReference type="PANTHER" id="PTHR11406">
    <property type="entry name" value="PHOSPHOGLYCERATE KINASE"/>
    <property type="match status" value="1"/>
</dbReference>
<dbReference type="PANTHER" id="PTHR11406:SF23">
    <property type="entry name" value="PHOSPHOGLYCERATE KINASE 1, CHLOROPLASTIC-RELATED"/>
    <property type="match status" value="1"/>
</dbReference>
<dbReference type="Pfam" id="PF00162">
    <property type="entry name" value="PGK"/>
    <property type="match status" value="1"/>
</dbReference>
<dbReference type="PIRSF" id="PIRSF000724">
    <property type="entry name" value="Pgk"/>
    <property type="match status" value="1"/>
</dbReference>
<dbReference type="PRINTS" id="PR00477">
    <property type="entry name" value="PHGLYCKINASE"/>
</dbReference>
<dbReference type="SUPFAM" id="SSF53748">
    <property type="entry name" value="Phosphoglycerate kinase"/>
    <property type="match status" value="1"/>
</dbReference>
<dbReference type="PROSITE" id="PS00111">
    <property type="entry name" value="PGLYCERATE_KINASE"/>
    <property type="match status" value="1"/>
</dbReference>
<sequence length="387" mass="41108">MSVIKMTDLDLAGKRVFIRADLNVPVKDGKVTSDARIRASLPTIELALKQGAKVMVTSHLGRPTEGEYNEEFSLLPVVNYLKDKLSNPVRLVKDYLDGVDVAEGELVVLENVRFNKGEKKDDETLSKKYAALCDVFVMDAFGTAHRAQASTHGIGKFADVACAGPLLAAELDALGKALKEPARPMVAIVGGSKVSTKLTVLDSLSKIADQLIVGGGIANTFIAAQGHDVGKSLYEADLVDEAKRLLTTCNIPVPSDVRVATEFSETASATLKSVNDVKADEQILDIGDASAQELAEILKNAKTILWNGPVGVFEFPNFRKGTEIVANAIADSEAFSIAGGGDTLAAIDLFGIADKISYISTGGGAFLEFVEGKVLPAVAMLEERAKK</sequence>
<proteinExistence type="inferred from homology"/>
<gene>
    <name evidence="1" type="primary">pgk</name>
    <name type="ordered locus">SSON_3078</name>
</gene>
<protein>
    <recommendedName>
        <fullName evidence="1">Phosphoglycerate kinase</fullName>
        <ecNumber evidence="1">2.7.2.3</ecNumber>
    </recommendedName>
</protein>
<keyword id="KW-0007">Acetylation</keyword>
<keyword id="KW-0067">ATP-binding</keyword>
<keyword id="KW-0963">Cytoplasm</keyword>
<keyword id="KW-0324">Glycolysis</keyword>
<keyword id="KW-0418">Kinase</keyword>
<keyword id="KW-0547">Nucleotide-binding</keyword>
<keyword id="KW-1185">Reference proteome</keyword>
<keyword id="KW-0808">Transferase</keyword>
<name>PGK_SHISS</name>
<evidence type="ECO:0000255" key="1">
    <source>
        <dbReference type="HAMAP-Rule" id="MF_00145"/>
    </source>
</evidence>
<comment type="catalytic activity">
    <reaction evidence="1">
        <text>(2R)-3-phosphoglycerate + ATP = (2R)-3-phospho-glyceroyl phosphate + ADP</text>
        <dbReference type="Rhea" id="RHEA:14801"/>
        <dbReference type="ChEBI" id="CHEBI:30616"/>
        <dbReference type="ChEBI" id="CHEBI:57604"/>
        <dbReference type="ChEBI" id="CHEBI:58272"/>
        <dbReference type="ChEBI" id="CHEBI:456216"/>
        <dbReference type="EC" id="2.7.2.3"/>
    </reaction>
</comment>
<comment type="pathway">
    <text evidence="1">Carbohydrate degradation; glycolysis; pyruvate from D-glyceraldehyde 3-phosphate: step 2/5.</text>
</comment>
<comment type="subunit">
    <text evidence="1">Monomer.</text>
</comment>
<comment type="subcellular location">
    <subcellularLocation>
        <location evidence="1">Cytoplasm</location>
    </subcellularLocation>
</comment>
<comment type="similarity">
    <text evidence="1">Belongs to the phosphoglycerate kinase family.</text>
</comment>
<organism>
    <name type="scientific">Shigella sonnei (strain Ss046)</name>
    <dbReference type="NCBI Taxonomy" id="300269"/>
    <lineage>
        <taxon>Bacteria</taxon>
        <taxon>Pseudomonadati</taxon>
        <taxon>Pseudomonadota</taxon>
        <taxon>Gammaproteobacteria</taxon>
        <taxon>Enterobacterales</taxon>
        <taxon>Enterobacteriaceae</taxon>
        <taxon>Shigella</taxon>
    </lineage>
</organism>
<reference key="1">
    <citation type="journal article" date="2005" name="Nucleic Acids Res.">
        <title>Genome dynamics and diversity of Shigella species, the etiologic agents of bacillary dysentery.</title>
        <authorList>
            <person name="Yang F."/>
            <person name="Yang J."/>
            <person name="Zhang X."/>
            <person name="Chen L."/>
            <person name="Jiang Y."/>
            <person name="Yan Y."/>
            <person name="Tang X."/>
            <person name="Wang J."/>
            <person name="Xiong Z."/>
            <person name="Dong J."/>
            <person name="Xue Y."/>
            <person name="Zhu Y."/>
            <person name="Xu X."/>
            <person name="Sun L."/>
            <person name="Chen S."/>
            <person name="Nie H."/>
            <person name="Peng J."/>
            <person name="Xu J."/>
            <person name="Wang Y."/>
            <person name="Yuan Z."/>
            <person name="Wen Y."/>
            <person name="Yao Z."/>
            <person name="Shen Y."/>
            <person name="Qiang B."/>
            <person name="Hou Y."/>
            <person name="Yu J."/>
            <person name="Jin Q."/>
        </authorList>
    </citation>
    <scope>NUCLEOTIDE SEQUENCE [LARGE SCALE GENOMIC DNA]</scope>
    <source>
        <strain>Ss046</strain>
    </source>
</reference>
<feature type="chain" id="PRO_1000058067" description="Phosphoglycerate kinase">
    <location>
        <begin position="1"/>
        <end position="387"/>
    </location>
</feature>
<feature type="binding site" evidence="1">
    <location>
        <begin position="21"/>
        <end position="23"/>
    </location>
    <ligand>
        <name>substrate</name>
    </ligand>
</feature>
<feature type="binding site" evidence="1">
    <location>
        <position position="36"/>
    </location>
    <ligand>
        <name>substrate</name>
    </ligand>
</feature>
<feature type="binding site" evidence="1">
    <location>
        <begin position="59"/>
        <end position="62"/>
    </location>
    <ligand>
        <name>substrate</name>
    </ligand>
</feature>
<feature type="binding site" evidence="1">
    <location>
        <position position="113"/>
    </location>
    <ligand>
        <name>substrate</name>
    </ligand>
</feature>
<feature type="binding site" evidence="1">
    <location>
        <position position="146"/>
    </location>
    <ligand>
        <name>substrate</name>
    </ligand>
</feature>
<feature type="binding site" evidence="1">
    <location>
        <position position="197"/>
    </location>
    <ligand>
        <name>ATP</name>
        <dbReference type="ChEBI" id="CHEBI:30616"/>
    </ligand>
</feature>
<feature type="binding site" evidence="1">
    <location>
        <position position="314"/>
    </location>
    <ligand>
        <name>ATP</name>
        <dbReference type="ChEBI" id="CHEBI:30616"/>
    </ligand>
</feature>
<feature type="binding site" evidence="1">
    <location>
        <begin position="340"/>
        <end position="343"/>
    </location>
    <ligand>
        <name>ATP</name>
        <dbReference type="ChEBI" id="CHEBI:30616"/>
    </ligand>
</feature>
<feature type="modified residue" description="N6-acetyllysine" evidence="1">
    <location>
        <position position="84"/>
    </location>
</feature>
<accession>Q3YXU6</accession>